<evidence type="ECO:0000250" key="1"/>
<evidence type="ECO:0000255" key="2">
    <source>
        <dbReference type="HAMAP-Rule" id="MF_00823"/>
    </source>
</evidence>
<evidence type="ECO:0000255" key="3">
    <source>
        <dbReference type="PROSITE-ProRule" id="PRU01137"/>
    </source>
</evidence>
<sequence>MSLNFLDFEQPIAELEAKIDSLTAVSRQDEKLDINIDEEVHRLREKSVELTRKIFADLGAWQIAQLARHPQRPYTLDYVRLAFDEFDELAGDRAYADDKAIVGGIARLDGRPVMIIGHQKGRETKEKIRRNFGMPAPEGYRKALRLMQMAERFKMPIITFIDTPGAYPGVGAEERGQSEAIARNLREMSRLGVPVVCTVIGEGGSGGALAIGVGDKVNMLQYSTYSVISPEGCASILWKSADKAPLAAEAMGIIAPRLKELKLIDSIIPEPLGGAHRNPEAMAASLKAQLLADLADLDVLSTEDLKNRRYQRLMSYGYA</sequence>
<keyword id="KW-0067">ATP-binding</keyword>
<keyword id="KW-0963">Cytoplasm</keyword>
<keyword id="KW-0275">Fatty acid biosynthesis</keyword>
<keyword id="KW-0276">Fatty acid metabolism</keyword>
<keyword id="KW-0444">Lipid biosynthesis</keyword>
<keyword id="KW-0443">Lipid metabolism</keyword>
<keyword id="KW-0547">Nucleotide-binding</keyword>
<keyword id="KW-1185">Reference proteome</keyword>
<keyword id="KW-0808">Transferase</keyword>
<accession>P0ABD7</accession>
<accession>P30867</accession>
<organism>
    <name type="scientific">Shigella flexneri</name>
    <dbReference type="NCBI Taxonomy" id="623"/>
    <lineage>
        <taxon>Bacteria</taxon>
        <taxon>Pseudomonadati</taxon>
        <taxon>Pseudomonadota</taxon>
        <taxon>Gammaproteobacteria</taxon>
        <taxon>Enterobacterales</taxon>
        <taxon>Enterobacteriaceae</taxon>
        <taxon>Shigella</taxon>
    </lineage>
</organism>
<feature type="initiator methionine" description="Removed" evidence="1">
    <location>
        <position position="1"/>
    </location>
</feature>
<feature type="chain" id="PRO_0000146778" description="Acetyl-coenzyme A carboxylase carboxyl transferase subunit alpha">
    <location>
        <begin position="2"/>
        <end position="319"/>
    </location>
</feature>
<feature type="domain" description="CoA carboxyltransferase C-terminal" evidence="3">
    <location>
        <begin position="35"/>
        <end position="296"/>
    </location>
</feature>
<reference key="1">
    <citation type="journal article" date="2002" name="Nucleic Acids Res.">
        <title>Genome sequence of Shigella flexneri 2a: insights into pathogenicity through comparison with genomes of Escherichia coli K12 and O157.</title>
        <authorList>
            <person name="Jin Q."/>
            <person name="Yuan Z."/>
            <person name="Xu J."/>
            <person name="Wang Y."/>
            <person name="Shen Y."/>
            <person name="Lu W."/>
            <person name="Wang J."/>
            <person name="Liu H."/>
            <person name="Yang J."/>
            <person name="Yang F."/>
            <person name="Zhang X."/>
            <person name="Zhang J."/>
            <person name="Yang G."/>
            <person name="Wu H."/>
            <person name="Qu D."/>
            <person name="Dong J."/>
            <person name="Sun L."/>
            <person name="Xue Y."/>
            <person name="Zhao A."/>
            <person name="Gao Y."/>
            <person name="Zhu J."/>
            <person name="Kan B."/>
            <person name="Ding K."/>
            <person name="Chen S."/>
            <person name="Cheng H."/>
            <person name="Yao Z."/>
            <person name="He B."/>
            <person name="Chen R."/>
            <person name="Ma D."/>
            <person name="Qiang B."/>
            <person name="Wen Y."/>
            <person name="Hou Y."/>
            <person name="Yu J."/>
        </authorList>
    </citation>
    <scope>NUCLEOTIDE SEQUENCE [LARGE SCALE GENOMIC DNA]</scope>
    <source>
        <strain>301 / Serotype 2a</strain>
    </source>
</reference>
<reference key="2">
    <citation type="journal article" date="2003" name="Infect. Immun.">
        <title>Complete genome sequence and comparative genomics of Shigella flexneri serotype 2a strain 2457T.</title>
        <authorList>
            <person name="Wei J."/>
            <person name="Goldberg M.B."/>
            <person name="Burland V."/>
            <person name="Venkatesan M.M."/>
            <person name="Deng W."/>
            <person name="Fournier G."/>
            <person name="Mayhew G.F."/>
            <person name="Plunkett G. III"/>
            <person name="Rose D.J."/>
            <person name="Darling A."/>
            <person name="Mau B."/>
            <person name="Perna N.T."/>
            <person name="Payne S.M."/>
            <person name="Runyen-Janecky L.J."/>
            <person name="Zhou S."/>
            <person name="Schwartz D.C."/>
            <person name="Blattner F.R."/>
        </authorList>
    </citation>
    <scope>NUCLEOTIDE SEQUENCE [LARGE SCALE GENOMIC DNA]</scope>
    <source>
        <strain>ATCC 700930 / 2457T / Serotype 2a</strain>
    </source>
</reference>
<protein>
    <recommendedName>
        <fullName evidence="2">Acetyl-coenzyme A carboxylase carboxyl transferase subunit alpha</fullName>
        <shortName evidence="2">ACCase subunit alpha</shortName>
        <shortName evidence="2">Acetyl-CoA carboxylase carboxyltransferase subunit alpha</shortName>
        <ecNumber evidence="2">2.1.3.15</ecNumber>
    </recommendedName>
</protein>
<dbReference type="EC" id="2.1.3.15" evidence="2"/>
<dbReference type="EMBL" id="AE005674">
    <property type="protein sequence ID" value="AAN41837.1"/>
    <property type="molecule type" value="Genomic_DNA"/>
</dbReference>
<dbReference type="EMBL" id="AE014073">
    <property type="protein sequence ID" value="AAP15718.1"/>
    <property type="molecule type" value="Genomic_DNA"/>
</dbReference>
<dbReference type="RefSeq" id="NP_706130.1">
    <property type="nucleotide sequence ID" value="NC_004337.2"/>
</dbReference>
<dbReference type="RefSeq" id="WP_000055741.1">
    <property type="nucleotide sequence ID" value="NZ_WPGW01000006.1"/>
</dbReference>
<dbReference type="SMR" id="P0ABD7"/>
<dbReference type="STRING" id="198214.SF0175"/>
<dbReference type="PaxDb" id="198214-SF0175"/>
<dbReference type="GeneID" id="1024428"/>
<dbReference type="GeneID" id="86945115"/>
<dbReference type="KEGG" id="sfl:SF0175"/>
<dbReference type="KEGG" id="sfx:S0178"/>
<dbReference type="PATRIC" id="fig|198214.7.peg.197"/>
<dbReference type="HOGENOM" id="CLU_015486_0_2_6"/>
<dbReference type="UniPathway" id="UPA00655">
    <property type="reaction ID" value="UER00711"/>
</dbReference>
<dbReference type="Proteomes" id="UP000001006">
    <property type="component" value="Chromosome"/>
</dbReference>
<dbReference type="Proteomes" id="UP000002673">
    <property type="component" value="Chromosome"/>
</dbReference>
<dbReference type="GO" id="GO:0009317">
    <property type="term" value="C:acetyl-CoA carboxylase complex"/>
    <property type="evidence" value="ECO:0007669"/>
    <property type="project" value="InterPro"/>
</dbReference>
<dbReference type="GO" id="GO:0003989">
    <property type="term" value="F:acetyl-CoA carboxylase activity"/>
    <property type="evidence" value="ECO:0007669"/>
    <property type="project" value="InterPro"/>
</dbReference>
<dbReference type="GO" id="GO:0005524">
    <property type="term" value="F:ATP binding"/>
    <property type="evidence" value="ECO:0007669"/>
    <property type="project" value="UniProtKB-KW"/>
</dbReference>
<dbReference type="GO" id="GO:0016743">
    <property type="term" value="F:carboxyl- or carbamoyltransferase activity"/>
    <property type="evidence" value="ECO:0007669"/>
    <property type="project" value="UniProtKB-UniRule"/>
</dbReference>
<dbReference type="GO" id="GO:0006633">
    <property type="term" value="P:fatty acid biosynthetic process"/>
    <property type="evidence" value="ECO:0007669"/>
    <property type="project" value="UniProtKB-KW"/>
</dbReference>
<dbReference type="GO" id="GO:2001295">
    <property type="term" value="P:malonyl-CoA biosynthetic process"/>
    <property type="evidence" value="ECO:0007669"/>
    <property type="project" value="UniProtKB-UniRule"/>
</dbReference>
<dbReference type="FunFam" id="3.90.226.10:FF:000008">
    <property type="entry name" value="Acetyl-coenzyme A carboxylase carboxyl transferase subunit alpha"/>
    <property type="match status" value="1"/>
</dbReference>
<dbReference type="Gene3D" id="3.90.226.10">
    <property type="entry name" value="2-enoyl-CoA Hydratase, Chain A, domain 1"/>
    <property type="match status" value="1"/>
</dbReference>
<dbReference type="HAMAP" id="MF_00823">
    <property type="entry name" value="AcetylCoA_CT_alpha"/>
    <property type="match status" value="1"/>
</dbReference>
<dbReference type="InterPro" id="IPR001095">
    <property type="entry name" value="Acetyl_CoA_COase_a_su"/>
</dbReference>
<dbReference type="InterPro" id="IPR029045">
    <property type="entry name" value="ClpP/crotonase-like_dom_sf"/>
</dbReference>
<dbReference type="InterPro" id="IPR011763">
    <property type="entry name" value="COA_CT_C"/>
</dbReference>
<dbReference type="NCBIfam" id="TIGR00513">
    <property type="entry name" value="accA"/>
    <property type="match status" value="1"/>
</dbReference>
<dbReference type="NCBIfam" id="NF041504">
    <property type="entry name" value="AccA_sub"/>
    <property type="match status" value="1"/>
</dbReference>
<dbReference type="NCBIfam" id="NF004344">
    <property type="entry name" value="PRK05724.1"/>
    <property type="match status" value="1"/>
</dbReference>
<dbReference type="PANTHER" id="PTHR42853">
    <property type="entry name" value="ACETYL-COENZYME A CARBOXYLASE CARBOXYL TRANSFERASE SUBUNIT ALPHA"/>
    <property type="match status" value="1"/>
</dbReference>
<dbReference type="PANTHER" id="PTHR42853:SF3">
    <property type="entry name" value="ACETYL-COENZYME A CARBOXYLASE CARBOXYL TRANSFERASE SUBUNIT ALPHA, CHLOROPLASTIC"/>
    <property type="match status" value="1"/>
</dbReference>
<dbReference type="Pfam" id="PF03255">
    <property type="entry name" value="ACCA"/>
    <property type="match status" value="1"/>
</dbReference>
<dbReference type="PRINTS" id="PR01069">
    <property type="entry name" value="ACCCTRFRASEA"/>
</dbReference>
<dbReference type="SUPFAM" id="SSF52096">
    <property type="entry name" value="ClpP/crotonase"/>
    <property type="match status" value="1"/>
</dbReference>
<dbReference type="PROSITE" id="PS50989">
    <property type="entry name" value="COA_CT_CTER"/>
    <property type="match status" value="1"/>
</dbReference>
<gene>
    <name evidence="2" type="primary">accA</name>
    <name type="ordered locus">SF0175</name>
    <name type="ordered locus">S0178</name>
</gene>
<name>ACCA_SHIFL</name>
<comment type="function">
    <text evidence="2">Component of the acetyl coenzyme A carboxylase (ACC) complex. First, biotin carboxylase catalyzes the carboxylation of biotin on its carrier protein (BCCP) and then the CO(2) group is transferred by the carboxyltransferase to acetyl-CoA to form malonyl-CoA.</text>
</comment>
<comment type="catalytic activity">
    <reaction evidence="2">
        <text>N(6)-carboxybiotinyl-L-lysyl-[protein] + acetyl-CoA = N(6)-biotinyl-L-lysyl-[protein] + malonyl-CoA</text>
        <dbReference type="Rhea" id="RHEA:54728"/>
        <dbReference type="Rhea" id="RHEA-COMP:10505"/>
        <dbReference type="Rhea" id="RHEA-COMP:10506"/>
        <dbReference type="ChEBI" id="CHEBI:57288"/>
        <dbReference type="ChEBI" id="CHEBI:57384"/>
        <dbReference type="ChEBI" id="CHEBI:83144"/>
        <dbReference type="ChEBI" id="CHEBI:83145"/>
        <dbReference type="EC" id="2.1.3.15"/>
    </reaction>
</comment>
<comment type="pathway">
    <text evidence="2">Lipid metabolism; malonyl-CoA biosynthesis; malonyl-CoA from acetyl-CoA: step 1/1.</text>
</comment>
<comment type="subunit">
    <text evidence="2">Acetyl-CoA carboxylase is a heterohexamer composed of biotin carboxyl carrier protein (AccB), biotin carboxylase (AccC) and two subunits each of ACCase subunit alpha (AccA) and ACCase subunit beta (AccD).</text>
</comment>
<comment type="subcellular location">
    <subcellularLocation>
        <location evidence="2">Cytoplasm</location>
    </subcellularLocation>
</comment>
<comment type="similarity">
    <text evidence="2">Belongs to the AccA family.</text>
</comment>
<proteinExistence type="inferred from homology"/>